<name>MURC_METS4</name>
<accession>B0UFC6</accession>
<keyword id="KW-0067">ATP-binding</keyword>
<keyword id="KW-0131">Cell cycle</keyword>
<keyword id="KW-0132">Cell division</keyword>
<keyword id="KW-0133">Cell shape</keyword>
<keyword id="KW-0961">Cell wall biogenesis/degradation</keyword>
<keyword id="KW-0963">Cytoplasm</keyword>
<keyword id="KW-0436">Ligase</keyword>
<keyword id="KW-0547">Nucleotide-binding</keyword>
<keyword id="KW-0573">Peptidoglycan synthesis</keyword>
<evidence type="ECO:0000255" key="1">
    <source>
        <dbReference type="HAMAP-Rule" id="MF_00046"/>
    </source>
</evidence>
<protein>
    <recommendedName>
        <fullName evidence="1">UDP-N-acetylmuramate--L-alanine ligase</fullName>
        <ecNumber evidence="1">6.3.2.8</ecNumber>
    </recommendedName>
    <alternativeName>
        <fullName evidence="1">UDP-N-acetylmuramoyl-L-alanine synthetase</fullName>
    </alternativeName>
</protein>
<sequence>MKLPNKLGPIHFIGIGGIGMSGIAEVMHNLGYTVQGSDAADNYNVKRLAEKGIRTFVGHRAENLAEAELVVVSTAIRRDNPELAMARERRLPVVRRAEMLAELMRFKSCVAVAGTHGKTTTTSLVATLLDAGGLDPTVINGGIINAYGTNARMGEGEWMVVEADESDGTFLKLPADIAIVTNIDPEHLDHFGSFDAIKDAFRAFIDNIPFYGFAVMCIDHPTVQDLVGRIEDRRIITYGENPQADVRLIDVDLRGGQSRFRVMIRDRRPGFRLEMEDLVLPMPGKHNALNATAALAVAHELGVAPEAIRRALAGFGGVKRRFTRTGEWNGAQIFDDYGHHPVEIKAVLKAARASTEGNVVAVVQPHRYTRLASLFDDFCTCFNDADTVIVAPVYAAGEAPIEGFDRDTLVAGLKSRGHRNAVALERSEDLAGLVNGLVGPGDYVVCLGAGNITQWAYALPGELSALGEKAA</sequence>
<dbReference type="EC" id="6.3.2.8" evidence="1"/>
<dbReference type="EMBL" id="CP000943">
    <property type="protein sequence ID" value="ACA20953.1"/>
    <property type="molecule type" value="Genomic_DNA"/>
</dbReference>
<dbReference type="RefSeq" id="WP_012336329.1">
    <property type="nucleotide sequence ID" value="NC_010511.1"/>
</dbReference>
<dbReference type="SMR" id="B0UFC6"/>
<dbReference type="STRING" id="426117.M446_6703"/>
<dbReference type="KEGG" id="met:M446_6703"/>
<dbReference type="eggNOG" id="COG0773">
    <property type="taxonomic scope" value="Bacteria"/>
</dbReference>
<dbReference type="HOGENOM" id="CLU_028104_2_2_5"/>
<dbReference type="UniPathway" id="UPA00219"/>
<dbReference type="GO" id="GO:0005737">
    <property type="term" value="C:cytoplasm"/>
    <property type="evidence" value="ECO:0007669"/>
    <property type="project" value="UniProtKB-SubCell"/>
</dbReference>
<dbReference type="GO" id="GO:0005524">
    <property type="term" value="F:ATP binding"/>
    <property type="evidence" value="ECO:0007669"/>
    <property type="project" value="UniProtKB-UniRule"/>
</dbReference>
<dbReference type="GO" id="GO:0008763">
    <property type="term" value="F:UDP-N-acetylmuramate-L-alanine ligase activity"/>
    <property type="evidence" value="ECO:0007669"/>
    <property type="project" value="UniProtKB-UniRule"/>
</dbReference>
<dbReference type="GO" id="GO:0051301">
    <property type="term" value="P:cell division"/>
    <property type="evidence" value="ECO:0007669"/>
    <property type="project" value="UniProtKB-KW"/>
</dbReference>
<dbReference type="GO" id="GO:0071555">
    <property type="term" value="P:cell wall organization"/>
    <property type="evidence" value="ECO:0007669"/>
    <property type="project" value="UniProtKB-KW"/>
</dbReference>
<dbReference type="GO" id="GO:0009252">
    <property type="term" value="P:peptidoglycan biosynthetic process"/>
    <property type="evidence" value="ECO:0007669"/>
    <property type="project" value="UniProtKB-UniRule"/>
</dbReference>
<dbReference type="GO" id="GO:0008360">
    <property type="term" value="P:regulation of cell shape"/>
    <property type="evidence" value="ECO:0007669"/>
    <property type="project" value="UniProtKB-KW"/>
</dbReference>
<dbReference type="Gene3D" id="3.90.190.20">
    <property type="entry name" value="Mur ligase, C-terminal domain"/>
    <property type="match status" value="1"/>
</dbReference>
<dbReference type="Gene3D" id="3.40.1190.10">
    <property type="entry name" value="Mur-like, catalytic domain"/>
    <property type="match status" value="1"/>
</dbReference>
<dbReference type="Gene3D" id="3.40.50.720">
    <property type="entry name" value="NAD(P)-binding Rossmann-like Domain"/>
    <property type="match status" value="1"/>
</dbReference>
<dbReference type="HAMAP" id="MF_00046">
    <property type="entry name" value="MurC"/>
    <property type="match status" value="1"/>
</dbReference>
<dbReference type="InterPro" id="IPR036565">
    <property type="entry name" value="Mur-like_cat_sf"/>
</dbReference>
<dbReference type="InterPro" id="IPR004101">
    <property type="entry name" value="Mur_ligase_C"/>
</dbReference>
<dbReference type="InterPro" id="IPR036615">
    <property type="entry name" value="Mur_ligase_C_dom_sf"/>
</dbReference>
<dbReference type="InterPro" id="IPR013221">
    <property type="entry name" value="Mur_ligase_cen"/>
</dbReference>
<dbReference type="InterPro" id="IPR000713">
    <property type="entry name" value="Mur_ligase_N"/>
</dbReference>
<dbReference type="InterPro" id="IPR050061">
    <property type="entry name" value="MurCDEF_pg_biosynth"/>
</dbReference>
<dbReference type="InterPro" id="IPR005758">
    <property type="entry name" value="UDP-N-AcMur_Ala_ligase_MurC"/>
</dbReference>
<dbReference type="NCBIfam" id="TIGR01082">
    <property type="entry name" value="murC"/>
    <property type="match status" value="1"/>
</dbReference>
<dbReference type="PANTHER" id="PTHR43445:SF3">
    <property type="entry name" value="UDP-N-ACETYLMURAMATE--L-ALANINE LIGASE"/>
    <property type="match status" value="1"/>
</dbReference>
<dbReference type="PANTHER" id="PTHR43445">
    <property type="entry name" value="UDP-N-ACETYLMURAMATE--L-ALANINE LIGASE-RELATED"/>
    <property type="match status" value="1"/>
</dbReference>
<dbReference type="Pfam" id="PF01225">
    <property type="entry name" value="Mur_ligase"/>
    <property type="match status" value="1"/>
</dbReference>
<dbReference type="Pfam" id="PF02875">
    <property type="entry name" value="Mur_ligase_C"/>
    <property type="match status" value="1"/>
</dbReference>
<dbReference type="Pfam" id="PF08245">
    <property type="entry name" value="Mur_ligase_M"/>
    <property type="match status" value="1"/>
</dbReference>
<dbReference type="SUPFAM" id="SSF51984">
    <property type="entry name" value="MurCD N-terminal domain"/>
    <property type="match status" value="1"/>
</dbReference>
<dbReference type="SUPFAM" id="SSF53623">
    <property type="entry name" value="MurD-like peptide ligases, catalytic domain"/>
    <property type="match status" value="1"/>
</dbReference>
<dbReference type="SUPFAM" id="SSF53244">
    <property type="entry name" value="MurD-like peptide ligases, peptide-binding domain"/>
    <property type="match status" value="1"/>
</dbReference>
<proteinExistence type="inferred from homology"/>
<feature type="chain" id="PRO_1000091117" description="UDP-N-acetylmuramate--L-alanine ligase">
    <location>
        <begin position="1"/>
        <end position="471"/>
    </location>
</feature>
<feature type="binding site" evidence="1">
    <location>
        <begin position="114"/>
        <end position="120"/>
    </location>
    <ligand>
        <name>ATP</name>
        <dbReference type="ChEBI" id="CHEBI:30616"/>
    </ligand>
</feature>
<organism>
    <name type="scientific">Methylobacterium sp. (strain 4-46)</name>
    <dbReference type="NCBI Taxonomy" id="426117"/>
    <lineage>
        <taxon>Bacteria</taxon>
        <taxon>Pseudomonadati</taxon>
        <taxon>Pseudomonadota</taxon>
        <taxon>Alphaproteobacteria</taxon>
        <taxon>Hyphomicrobiales</taxon>
        <taxon>Methylobacteriaceae</taxon>
        <taxon>Methylobacterium</taxon>
    </lineage>
</organism>
<comment type="function">
    <text evidence="1">Cell wall formation.</text>
</comment>
<comment type="catalytic activity">
    <reaction evidence="1">
        <text>UDP-N-acetyl-alpha-D-muramate + L-alanine + ATP = UDP-N-acetyl-alpha-D-muramoyl-L-alanine + ADP + phosphate + H(+)</text>
        <dbReference type="Rhea" id="RHEA:23372"/>
        <dbReference type="ChEBI" id="CHEBI:15378"/>
        <dbReference type="ChEBI" id="CHEBI:30616"/>
        <dbReference type="ChEBI" id="CHEBI:43474"/>
        <dbReference type="ChEBI" id="CHEBI:57972"/>
        <dbReference type="ChEBI" id="CHEBI:70757"/>
        <dbReference type="ChEBI" id="CHEBI:83898"/>
        <dbReference type="ChEBI" id="CHEBI:456216"/>
        <dbReference type="EC" id="6.3.2.8"/>
    </reaction>
</comment>
<comment type="pathway">
    <text evidence="1">Cell wall biogenesis; peptidoglycan biosynthesis.</text>
</comment>
<comment type="subcellular location">
    <subcellularLocation>
        <location evidence="1">Cytoplasm</location>
    </subcellularLocation>
</comment>
<comment type="similarity">
    <text evidence="1">Belongs to the MurCDEF family.</text>
</comment>
<reference key="1">
    <citation type="submission" date="2008-02" db="EMBL/GenBank/DDBJ databases">
        <title>Complete sequence of chromosome of Methylobacterium sp. 4-46.</title>
        <authorList>
            <consortium name="US DOE Joint Genome Institute"/>
            <person name="Copeland A."/>
            <person name="Lucas S."/>
            <person name="Lapidus A."/>
            <person name="Glavina del Rio T."/>
            <person name="Dalin E."/>
            <person name="Tice H."/>
            <person name="Bruce D."/>
            <person name="Goodwin L."/>
            <person name="Pitluck S."/>
            <person name="Chertkov O."/>
            <person name="Brettin T."/>
            <person name="Detter J.C."/>
            <person name="Han C."/>
            <person name="Kuske C.R."/>
            <person name="Schmutz J."/>
            <person name="Larimer F."/>
            <person name="Land M."/>
            <person name="Hauser L."/>
            <person name="Kyrpides N."/>
            <person name="Ivanova N."/>
            <person name="Marx C.J."/>
            <person name="Richardson P."/>
        </authorList>
    </citation>
    <scope>NUCLEOTIDE SEQUENCE [LARGE SCALE GENOMIC DNA]</scope>
    <source>
        <strain>4-46</strain>
    </source>
</reference>
<gene>
    <name evidence="1" type="primary">murC</name>
    <name type="ordered locus">M446_6703</name>
</gene>